<name>PYRR_STRR6</name>
<comment type="function">
    <text evidence="2">Regulates transcriptional attenuation of the pyrimidine nucleotide (pyr) operon by binding in a uridine-dependent manner to specific sites on pyr mRNA. This disrupts an antiterminator hairpin in the RNA and favors formation of a downstream transcription terminator, leading to a reduced expression of downstream genes.</text>
</comment>
<comment type="function">
    <text evidence="2">Also displays a weak uracil phosphoribosyltransferase activity which is not physiologically significant.</text>
</comment>
<comment type="catalytic activity">
    <reaction evidence="2">
        <text>UMP + diphosphate = 5-phospho-alpha-D-ribose 1-diphosphate + uracil</text>
        <dbReference type="Rhea" id="RHEA:13017"/>
        <dbReference type="ChEBI" id="CHEBI:17568"/>
        <dbReference type="ChEBI" id="CHEBI:33019"/>
        <dbReference type="ChEBI" id="CHEBI:57865"/>
        <dbReference type="ChEBI" id="CHEBI:58017"/>
        <dbReference type="EC" id="2.4.2.9"/>
    </reaction>
</comment>
<comment type="subunit">
    <text evidence="2">Homodimer and homohexamer; in equilibrium.</text>
</comment>
<comment type="similarity">
    <text evidence="2">Belongs to the purine/pyrimidine phosphoribosyltransferase family. PyrR subfamily.</text>
</comment>
<accession>P65947</accession>
<accession>Q97QE1</accession>
<protein>
    <recommendedName>
        <fullName evidence="2">Bifunctional protein PyrR</fullName>
    </recommendedName>
    <domain>
        <recommendedName>
            <fullName evidence="2">Pyrimidine operon regulatory protein</fullName>
        </recommendedName>
    </domain>
    <domain>
        <recommendedName>
            <fullName evidence="2">Uracil phosphoribosyltransferase</fullName>
            <shortName evidence="2">UPRTase</shortName>
            <ecNumber evidence="2">2.4.2.9</ecNumber>
        </recommendedName>
    </domain>
</protein>
<organism>
    <name type="scientific">Streptococcus pneumoniae (strain ATCC BAA-255 / R6)</name>
    <dbReference type="NCBI Taxonomy" id="171101"/>
    <lineage>
        <taxon>Bacteria</taxon>
        <taxon>Bacillati</taxon>
        <taxon>Bacillota</taxon>
        <taxon>Bacilli</taxon>
        <taxon>Lactobacillales</taxon>
        <taxon>Streptococcaceae</taxon>
        <taxon>Streptococcus</taxon>
    </lineage>
</organism>
<keyword id="KW-0328">Glycosyltransferase</keyword>
<keyword id="KW-1185">Reference proteome</keyword>
<keyword id="KW-0694">RNA-binding</keyword>
<keyword id="KW-0804">Transcription</keyword>
<keyword id="KW-0805">Transcription regulation</keyword>
<keyword id="KW-0806">Transcription termination</keyword>
<keyword id="KW-0808">Transferase</keyword>
<gene>
    <name evidence="2" type="primary">pyrR</name>
    <name type="ordered locus">spr1156</name>
</gene>
<proteinExistence type="inferred from homology"/>
<sequence>MKTKEVVDELTVKRAITRITYEIIERNKDLNKIVLAGIKTRGVFIAHRIQERLKQLENLSVPVVELDTKPFRDDVKSGEDTSLVSVDVTDREVILVDDVLYTGRTIRAAIDNIVGHGRPARVSLAVLVDRGHRELPIRPDYVGKNIPTSRSEEIIVEMTELDDQDRVLITEEA</sequence>
<reference key="1">
    <citation type="journal article" date="2001" name="J. Bacteriol.">
        <title>Genome of the bacterium Streptococcus pneumoniae strain R6.</title>
        <authorList>
            <person name="Hoskins J."/>
            <person name="Alborn W.E. Jr."/>
            <person name="Arnold J."/>
            <person name="Blaszczak L.C."/>
            <person name="Burgett S."/>
            <person name="DeHoff B.S."/>
            <person name="Estrem S.T."/>
            <person name="Fritz L."/>
            <person name="Fu D.-J."/>
            <person name="Fuller W."/>
            <person name="Geringer C."/>
            <person name="Gilmour R."/>
            <person name="Glass J.S."/>
            <person name="Khoja H."/>
            <person name="Kraft A.R."/>
            <person name="Lagace R.E."/>
            <person name="LeBlanc D.J."/>
            <person name="Lee L.N."/>
            <person name="Lefkowitz E.J."/>
            <person name="Lu J."/>
            <person name="Matsushima P."/>
            <person name="McAhren S.M."/>
            <person name="McHenney M."/>
            <person name="McLeaster K."/>
            <person name="Mundy C.W."/>
            <person name="Nicas T.I."/>
            <person name="Norris F.H."/>
            <person name="O'Gara M."/>
            <person name="Peery R.B."/>
            <person name="Robertson G.T."/>
            <person name="Rockey P."/>
            <person name="Sun P.-M."/>
            <person name="Winkler M.E."/>
            <person name="Yang Y."/>
            <person name="Young-Bellido M."/>
            <person name="Zhao G."/>
            <person name="Zook C.A."/>
            <person name="Baltz R.H."/>
            <person name="Jaskunas S.R."/>
            <person name="Rosteck P.R. Jr."/>
            <person name="Skatrud P.L."/>
            <person name="Glass J.I."/>
        </authorList>
    </citation>
    <scope>NUCLEOTIDE SEQUENCE [LARGE SCALE GENOMIC DNA]</scope>
    <source>
        <strain>ATCC BAA-255 / R6</strain>
    </source>
</reference>
<feature type="chain" id="PRO_0000183065" description="Bifunctional protein PyrR">
    <location>
        <begin position="1"/>
        <end position="173"/>
    </location>
</feature>
<feature type="short sequence motif" description="PRPP-binding" evidence="2">
    <location>
        <begin position="93"/>
        <end position="105"/>
    </location>
</feature>
<feature type="binding site" evidence="1">
    <location>
        <begin position="40"/>
        <end position="41"/>
    </location>
    <ligand>
        <name>substrate</name>
    </ligand>
</feature>
<feature type="binding site" evidence="1">
    <location>
        <begin position="97"/>
        <end position="105"/>
    </location>
    <ligand>
        <name>substrate</name>
    </ligand>
</feature>
<feature type="binding site" evidence="1">
    <location>
        <position position="130"/>
    </location>
    <ligand>
        <name>substrate</name>
    </ligand>
</feature>
<dbReference type="EC" id="2.4.2.9" evidence="2"/>
<dbReference type="EMBL" id="AE007317">
    <property type="protein sequence ID" value="AAK99959.1"/>
    <property type="molecule type" value="Genomic_DNA"/>
</dbReference>
<dbReference type="PIR" id="C98016">
    <property type="entry name" value="C98016"/>
</dbReference>
<dbReference type="RefSeq" id="NP_358749.1">
    <property type="nucleotide sequence ID" value="NC_003098.1"/>
</dbReference>
<dbReference type="RefSeq" id="WP_000850024.1">
    <property type="nucleotide sequence ID" value="NC_003098.1"/>
</dbReference>
<dbReference type="SMR" id="P65947"/>
<dbReference type="STRING" id="171101.spr1156"/>
<dbReference type="GeneID" id="45653435"/>
<dbReference type="KEGG" id="spr:spr1156"/>
<dbReference type="PATRIC" id="fig|171101.6.peg.1254"/>
<dbReference type="eggNOG" id="COG2065">
    <property type="taxonomic scope" value="Bacteria"/>
</dbReference>
<dbReference type="HOGENOM" id="CLU_094234_2_1_9"/>
<dbReference type="Proteomes" id="UP000000586">
    <property type="component" value="Chromosome"/>
</dbReference>
<dbReference type="GO" id="GO:0003723">
    <property type="term" value="F:RNA binding"/>
    <property type="evidence" value="ECO:0007669"/>
    <property type="project" value="UniProtKB-UniRule"/>
</dbReference>
<dbReference type="GO" id="GO:0004845">
    <property type="term" value="F:uracil phosphoribosyltransferase activity"/>
    <property type="evidence" value="ECO:0007669"/>
    <property type="project" value="UniProtKB-UniRule"/>
</dbReference>
<dbReference type="GO" id="GO:0006353">
    <property type="term" value="P:DNA-templated transcription termination"/>
    <property type="evidence" value="ECO:0007669"/>
    <property type="project" value="UniProtKB-UniRule"/>
</dbReference>
<dbReference type="CDD" id="cd06223">
    <property type="entry name" value="PRTases_typeI"/>
    <property type="match status" value="1"/>
</dbReference>
<dbReference type="FunFam" id="3.40.50.2020:FF:000020">
    <property type="entry name" value="Bifunctional protein PyrR"/>
    <property type="match status" value="1"/>
</dbReference>
<dbReference type="Gene3D" id="3.40.50.2020">
    <property type="match status" value="1"/>
</dbReference>
<dbReference type="HAMAP" id="MF_01219">
    <property type="entry name" value="PyrR"/>
    <property type="match status" value="1"/>
</dbReference>
<dbReference type="InterPro" id="IPR000836">
    <property type="entry name" value="PRibTrfase_dom"/>
</dbReference>
<dbReference type="InterPro" id="IPR029057">
    <property type="entry name" value="PRTase-like"/>
</dbReference>
<dbReference type="InterPro" id="IPR023050">
    <property type="entry name" value="PyrR"/>
</dbReference>
<dbReference type="InterPro" id="IPR050137">
    <property type="entry name" value="PyrR_bifunctional"/>
</dbReference>
<dbReference type="NCBIfam" id="NF003548">
    <property type="entry name" value="PRK05205.1-4"/>
    <property type="match status" value="1"/>
</dbReference>
<dbReference type="NCBIfam" id="NF003549">
    <property type="entry name" value="PRK05205.1-5"/>
    <property type="match status" value="1"/>
</dbReference>
<dbReference type="PANTHER" id="PTHR11608">
    <property type="entry name" value="BIFUNCTIONAL PROTEIN PYRR"/>
    <property type="match status" value="1"/>
</dbReference>
<dbReference type="PANTHER" id="PTHR11608:SF0">
    <property type="entry name" value="BIFUNCTIONAL PROTEIN PYRR"/>
    <property type="match status" value="1"/>
</dbReference>
<dbReference type="Pfam" id="PF00156">
    <property type="entry name" value="Pribosyltran"/>
    <property type="match status" value="1"/>
</dbReference>
<dbReference type="SUPFAM" id="SSF53271">
    <property type="entry name" value="PRTase-like"/>
    <property type="match status" value="1"/>
</dbReference>
<evidence type="ECO:0000250" key="1"/>
<evidence type="ECO:0000255" key="2">
    <source>
        <dbReference type="HAMAP-Rule" id="MF_01219"/>
    </source>
</evidence>